<protein>
    <recommendedName>
        <fullName evidence="1">L-lactate dehydrogenase</fullName>
        <shortName evidence="1">L-LDH</shortName>
        <ecNumber evidence="1">1.1.1.27</ecNumber>
    </recommendedName>
</protein>
<name>LDH_STRPB</name>
<organism>
    <name type="scientific">Streptococcus pyogenes serotype M12 (strain MGAS2096)</name>
    <dbReference type="NCBI Taxonomy" id="370553"/>
    <lineage>
        <taxon>Bacteria</taxon>
        <taxon>Bacillati</taxon>
        <taxon>Bacillota</taxon>
        <taxon>Bacilli</taxon>
        <taxon>Lactobacillales</taxon>
        <taxon>Streptococcaceae</taxon>
        <taxon>Streptococcus</taxon>
    </lineage>
</organism>
<reference key="1">
    <citation type="journal article" date="2006" name="Proc. Natl. Acad. Sci. U.S.A.">
        <title>Molecular genetic anatomy of inter- and intraserotype variation in the human bacterial pathogen group A Streptococcus.</title>
        <authorList>
            <person name="Beres S.B."/>
            <person name="Richter E.W."/>
            <person name="Nagiec M.J."/>
            <person name="Sumby P."/>
            <person name="Porcella S.F."/>
            <person name="DeLeo F.R."/>
            <person name="Musser J.M."/>
        </authorList>
    </citation>
    <scope>NUCLEOTIDE SEQUENCE [LARGE SCALE GENOMIC DNA]</scope>
    <source>
        <strain>MGAS2096</strain>
    </source>
</reference>
<accession>Q1JBQ9</accession>
<evidence type="ECO:0000255" key="1">
    <source>
        <dbReference type="HAMAP-Rule" id="MF_00488"/>
    </source>
</evidence>
<dbReference type="EC" id="1.1.1.27" evidence="1"/>
<dbReference type="EMBL" id="CP000261">
    <property type="protein sequence ID" value="ABF35999.1"/>
    <property type="molecule type" value="Genomic_DNA"/>
</dbReference>
<dbReference type="SMR" id="Q1JBQ9"/>
<dbReference type="KEGG" id="spj:MGAS2096_Spy0947"/>
<dbReference type="HOGENOM" id="CLU_045401_1_1_9"/>
<dbReference type="UniPathway" id="UPA00554">
    <property type="reaction ID" value="UER00611"/>
</dbReference>
<dbReference type="GO" id="GO:0005737">
    <property type="term" value="C:cytoplasm"/>
    <property type="evidence" value="ECO:0007669"/>
    <property type="project" value="UniProtKB-SubCell"/>
</dbReference>
<dbReference type="GO" id="GO:0004459">
    <property type="term" value="F:L-lactate dehydrogenase activity"/>
    <property type="evidence" value="ECO:0007669"/>
    <property type="project" value="UniProtKB-UniRule"/>
</dbReference>
<dbReference type="GO" id="GO:0006096">
    <property type="term" value="P:glycolytic process"/>
    <property type="evidence" value="ECO:0007669"/>
    <property type="project" value="UniProtKB-UniRule"/>
</dbReference>
<dbReference type="GO" id="GO:0006089">
    <property type="term" value="P:lactate metabolic process"/>
    <property type="evidence" value="ECO:0007669"/>
    <property type="project" value="TreeGrafter"/>
</dbReference>
<dbReference type="CDD" id="cd05291">
    <property type="entry name" value="HicDH_like"/>
    <property type="match status" value="1"/>
</dbReference>
<dbReference type="FunFam" id="3.40.50.720:FF:000018">
    <property type="entry name" value="Malate dehydrogenase"/>
    <property type="match status" value="1"/>
</dbReference>
<dbReference type="Gene3D" id="3.90.110.10">
    <property type="entry name" value="Lactate dehydrogenase/glycoside hydrolase, family 4, C-terminal"/>
    <property type="match status" value="1"/>
</dbReference>
<dbReference type="Gene3D" id="3.40.50.720">
    <property type="entry name" value="NAD(P)-binding Rossmann-like Domain"/>
    <property type="match status" value="1"/>
</dbReference>
<dbReference type="HAMAP" id="MF_00488">
    <property type="entry name" value="Lactate_dehydrog"/>
    <property type="match status" value="1"/>
</dbReference>
<dbReference type="InterPro" id="IPR001557">
    <property type="entry name" value="L-lactate/malate_DH"/>
</dbReference>
<dbReference type="InterPro" id="IPR011304">
    <property type="entry name" value="L-lactate_DH"/>
</dbReference>
<dbReference type="InterPro" id="IPR018177">
    <property type="entry name" value="L-lactate_DH_AS"/>
</dbReference>
<dbReference type="InterPro" id="IPR022383">
    <property type="entry name" value="Lactate/malate_DH_C"/>
</dbReference>
<dbReference type="InterPro" id="IPR001236">
    <property type="entry name" value="Lactate/malate_DH_N"/>
</dbReference>
<dbReference type="InterPro" id="IPR015955">
    <property type="entry name" value="Lactate_DH/Glyco_Ohase_4_C"/>
</dbReference>
<dbReference type="InterPro" id="IPR036291">
    <property type="entry name" value="NAD(P)-bd_dom_sf"/>
</dbReference>
<dbReference type="NCBIfam" id="TIGR01771">
    <property type="entry name" value="L-LDH-NAD"/>
    <property type="match status" value="1"/>
</dbReference>
<dbReference type="NCBIfam" id="NF000824">
    <property type="entry name" value="PRK00066.1"/>
    <property type="match status" value="1"/>
</dbReference>
<dbReference type="PANTHER" id="PTHR43128">
    <property type="entry name" value="L-2-HYDROXYCARBOXYLATE DEHYDROGENASE (NAD(P)(+))"/>
    <property type="match status" value="1"/>
</dbReference>
<dbReference type="PANTHER" id="PTHR43128:SF16">
    <property type="entry name" value="L-LACTATE DEHYDROGENASE"/>
    <property type="match status" value="1"/>
</dbReference>
<dbReference type="Pfam" id="PF02866">
    <property type="entry name" value="Ldh_1_C"/>
    <property type="match status" value="1"/>
</dbReference>
<dbReference type="Pfam" id="PF00056">
    <property type="entry name" value="Ldh_1_N"/>
    <property type="match status" value="1"/>
</dbReference>
<dbReference type="PIRSF" id="PIRSF000102">
    <property type="entry name" value="Lac_mal_DH"/>
    <property type="match status" value="1"/>
</dbReference>
<dbReference type="PRINTS" id="PR00086">
    <property type="entry name" value="LLDHDRGNASE"/>
</dbReference>
<dbReference type="SUPFAM" id="SSF56327">
    <property type="entry name" value="LDH C-terminal domain-like"/>
    <property type="match status" value="1"/>
</dbReference>
<dbReference type="SUPFAM" id="SSF51735">
    <property type="entry name" value="NAD(P)-binding Rossmann-fold domains"/>
    <property type="match status" value="1"/>
</dbReference>
<dbReference type="PROSITE" id="PS00064">
    <property type="entry name" value="L_LDH"/>
    <property type="match status" value="1"/>
</dbReference>
<keyword id="KW-0021">Allosteric enzyme</keyword>
<keyword id="KW-0963">Cytoplasm</keyword>
<keyword id="KW-0520">NAD</keyword>
<keyword id="KW-0560">Oxidoreductase</keyword>
<keyword id="KW-0597">Phosphoprotein</keyword>
<proteinExistence type="inferred from homology"/>
<sequence length="327" mass="35272">MTATKQHKKVILVGDGAVGSSYAFALVTQNIAQELGIIDIFKEKTQGDAEDLSHALAFTSPKKIYAADYSDCHDADLVVLTAGAPQKPGETRLDLVEKNLRINKEVVTQIVASGFKGIFLVAANPVDVLTYSTWKFSGFPKERVIGSGTSLDSARFRQALAAKIGVDARSVHAYIMGEHGDSEFAVWSHANVAGVGLYDWLQANRDIDEQGLVDLFISVRDAAYSIINKKGATFYGIAVALARITKAILDDENAVLPLSVFQEGQYEGVEDCYIGQPAIVGAYGIVRPVNIPLNDAELQKMQASANQLKAIIDEAFAKEEFASAAKN</sequence>
<comment type="function">
    <text evidence="1">Catalyzes the conversion of lactate to pyruvate.</text>
</comment>
<comment type="catalytic activity">
    <reaction evidence="1">
        <text>(S)-lactate + NAD(+) = pyruvate + NADH + H(+)</text>
        <dbReference type="Rhea" id="RHEA:23444"/>
        <dbReference type="ChEBI" id="CHEBI:15361"/>
        <dbReference type="ChEBI" id="CHEBI:15378"/>
        <dbReference type="ChEBI" id="CHEBI:16651"/>
        <dbReference type="ChEBI" id="CHEBI:57540"/>
        <dbReference type="ChEBI" id="CHEBI:57945"/>
        <dbReference type="EC" id="1.1.1.27"/>
    </reaction>
</comment>
<comment type="activity regulation">
    <text evidence="1">Allosterically activated by fructose 1,6-bisphosphate (FBP).</text>
</comment>
<comment type="pathway">
    <text evidence="1">Fermentation; pyruvate fermentation to lactate; (S)-lactate from pyruvate: step 1/1.</text>
</comment>
<comment type="subunit">
    <text evidence="1">Homotetramer.</text>
</comment>
<comment type="subcellular location">
    <subcellularLocation>
        <location evidence="1">Cytoplasm</location>
    </subcellularLocation>
</comment>
<comment type="similarity">
    <text evidence="1">Belongs to the LDH/MDH superfamily. LDH family.</text>
</comment>
<feature type="chain" id="PRO_1000026509" description="L-lactate dehydrogenase">
    <location>
        <begin position="1"/>
        <end position="327"/>
    </location>
</feature>
<feature type="active site" description="Proton acceptor" evidence="1">
    <location>
        <position position="179"/>
    </location>
</feature>
<feature type="binding site" evidence="1">
    <location>
        <position position="18"/>
    </location>
    <ligand>
        <name>NAD(+)</name>
        <dbReference type="ChEBI" id="CHEBI:57540"/>
    </ligand>
</feature>
<feature type="binding site" evidence="1">
    <location>
        <position position="39"/>
    </location>
    <ligand>
        <name>NAD(+)</name>
        <dbReference type="ChEBI" id="CHEBI:57540"/>
    </ligand>
</feature>
<feature type="binding site" evidence="1">
    <location>
        <position position="44"/>
    </location>
    <ligand>
        <name>NAD(+)</name>
        <dbReference type="ChEBI" id="CHEBI:57540"/>
    </ligand>
</feature>
<feature type="binding site" evidence="1">
    <location>
        <position position="69"/>
    </location>
    <ligand>
        <name>NAD(+)</name>
        <dbReference type="ChEBI" id="CHEBI:57540"/>
    </ligand>
</feature>
<feature type="binding site" evidence="1">
    <location>
        <begin position="83"/>
        <end position="84"/>
    </location>
    <ligand>
        <name>NAD(+)</name>
        <dbReference type="ChEBI" id="CHEBI:57540"/>
    </ligand>
</feature>
<feature type="binding site" evidence="1">
    <location>
        <position position="86"/>
    </location>
    <ligand>
        <name>substrate</name>
    </ligand>
</feature>
<feature type="binding site" evidence="1">
    <location>
        <position position="92"/>
    </location>
    <ligand>
        <name>substrate</name>
    </ligand>
</feature>
<feature type="binding site" evidence="1">
    <location>
        <begin position="122"/>
        <end position="124"/>
    </location>
    <ligand>
        <name>NAD(+)</name>
        <dbReference type="ChEBI" id="CHEBI:57540"/>
    </ligand>
</feature>
<feature type="binding site" evidence="1">
    <location>
        <begin position="124"/>
        <end position="127"/>
    </location>
    <ligand>
        <name>substrate</name>
    </ligand>
</feature>
<feature type="binding site" evidence="1">
    <location>
        <position position="147"/>
    </location>
    <ligand>
        <name>NAD(+)</name>
        <dbReference type="ChEBI" id="CHEBI:57540"/>
    </ligand>
</feature>
<feature type="binding site" evidence="1">
    <location>
        <begin position="152"/>
        <end position="155"/>
    </location>
    <ligand>
        <name>substrate</name>
    </ligand>
</feature>
<feature type="binding site" evidence="1">
    <location>
        <position position="157"/>
    </location>
    <ligand>
        <name>beta-D-fructose 1,6-bisphosphate</name>
        <dbReference type="ChEBI" id="CHEBI:32966"/>
        <note>allosteric activator</note>
    </ligand>
</feature>
<feature type="binding site" evidence="1">
    <location>
        <position position="172"/>
    </location>
    <ligand>
        <name>beta-D-fructose 1,6-bisphosphate</name>
        <dbReference type="ChEBI" id="CHEBI:32966"/>
        <note>allosteric activator</note>
    </ligand>
</feature>
<feature type="binding site" evidence="1">
    <location>
        <position position="233"/>
    </location>
    <ligand>
        <name>substrate</name>
    </ligand>
</feature>
<feature type="modified residue" description="Phosphotyrosine" evidence="1">
    <location>
        <position position="224"/>
    </location>
</feature>
<gene>
    <name evidence="1" type="primary">ldh</name>
    <name type="ordered locus">MGAS2096_Spy0947</name>
</gene>